<gene>
    <name evidence="1" type="primary">luxS</name>
    <name type="ordered locus">EcE24377A_2970</name>
</gene>
<evidence type="ECO:0000255" key="1">
    <source>
        <dbReference type="HAMAP-Rule" id="MF_00091"/>
    </source>
</evidence>
<comment type="function">
    <text evidence="1">Involved in the synthesis of autoinducer 2 (AI-2) which is secreted by bacteria and is used to communicate both the cell density and the metabolic potential of the environment. The regulation of gene expression in response to changes in cell density is called quorum sensing. Catalyzes the transformation of S-ribosylhomocysteine (RHC) to homocysteine (HC) and 4,5-dihydroxy-2,3-pentadione (DPD).</text>
</comment>
<comment type="catalytic activity">
    <reaction evidence="1">
        <text>S-(5-deoxy-D-ribos-5-yl)-L-homocysteine = (S)-4,5-dihydroxypentane-2,3-dione + L-homocysteine</text>
        <dbReference type="Rhea" id="RHEA:17753"/>
        <dbReference type="ChEBI" id="CHEBI:29484"/>
        <dbReference type="ChEBI" id="CHEBI:58195"/>
        <dbReference type="ChEBI" id="CHEBI:58199"/>
        <dbReference type="EC" id="4.4.1.21"/>
    </reaction>
</comment>
<comment type="cofactor">
    <cofactor evidence="1">
        <name>Fe cation</name>
        <dbReference type="ChEBI" id="CHEBI:24875"/>
    </cofactor>
    <text evidence="1">Binds 1 Fe cation per subunit.</text>
</comment>
<comment type="subunit">
    <text evidence="1">Homodimer.</text>
</comment>
<comment type="similarity">
    <text evidence="1">Belongs to the LuxS family.</text>
</comment>
<dbReference type="EC" id="4.4.1.21" evidence="1"/>
<dbReference type="EMBL" id="CP000800">
    <property type="protein sequence ID" value="ABV18660.1"/>
    <property type="molecule type" value="Genomic_DNA"/>
</dbReference>
<dbReference type="RefSeq" id="WP_001130211.1">
    <property type="nucleotide sequence ID" value="NC_009801.1"/>
</dbReference>
<dbReference type="SMR" id="A7ZQC0"/>
<dbReference type="GeneID" id="93779324"/>
<dbReference type="KEGG" id="ecw:EcE24377A_2970"/>
<dbReference type="HOGENOM" id="CLU_107531_2_0_6"/>
<dbReference type="Proteomes" id="UP000001122">
    <property type="component" value="Chromosome"/>
</dbReference>
<dbReference type="GO" id="GO:0005506">
    <property type="term" value="F:iron ion binding"/>
    <property type="evidence" value="ECO:0007669"/>
    <property type="project" value="InterPro"/>
</dbReference>
<dbReference type="GO" id="GO:0043768">
    <property type="term" value="F:S-ribosylhomocysteine lyase activity"/>
    <property type="evidence" value="ECO:0007669"/>
    <property type="project" value="UniProtKB-UniRule"/>
</dbReference>
<dbReference type="GO" id="GO:0009372">
    <property type="term" value="P:quorum sensing"/>
    <property type="evidence" value="ECO:0007669"/>
    <property type="project" value="UniProtKB-UniRule"/>
</dbReference>
<dbReference type="FunFam" id="3.30.1360.80:FF:000001">
    <property type="entry name" value="S-ribosylhomocysteine lyase"/>
    <property type="match status" value="1"/>
</dbReference>
<dbReference type="Gene3D" id="3.30.1360.80">
    <property type="entry name" value="S-ribosylhomocysteinase (LuxS)"/>
    <property type="match status" value="1"/>
</dbReference>
<dbReference type="HAMAP" id="MF_00091">
    <property type="entry name" value="LuxS"/>
    <property type="match status" value="1"/>
</dbReference>
<dbReference type="InterPro" id="IPR037005">
    <property type="entry name" value="LuxS_sf"/>
</dbReference>
<dbReference type="InterPro" id="IPR011249">
    <property type="entry name" value="Metalloenz_LuxS/M16"/>
</dbReference>
<dbReference type="InterPro" id="IPR003815">
    <property type="entry name" value="S-ribosylhomocysteinase"/>
</dbReference>
<dbReference type="NCBIfam" id="NF002602">
    <property type="entry name" value="PRK02260.1-2"/>
    <property type="match status" value="1"/>
</dbReference>
<dbReference type="PANTHER" id="PTHR35799">
    <property type="entry name" value="S-RIBOSYLHOMOCYSTEINE LYASE"/>
    <property type="match status" value="1"/>
</dbReference>
<dbReference type="PANTHER" id="PTHR35799:SF1">
    <property type="entry name" value="S-RIBOSYLHOMOCYSTEINE LYASE"/>
    <property type="match status" value="1"/>
</dbReference>
<dbReference type="Pfam" id="PF02664">
    <property type="entry name" value="LuxS"/>
    <property type="match status" value="1"/>
</dbReference>
<dbReference type="PIRSF" id="PIRSF006160">
    <property type="entry name" value="AI2"/>
    <property type="match status" value="1"/>
</dbReference>
<dbReference type="PRINTS" id="PR01487">
    <property type="entry name" value="LUXSPROTEIN"/>
</dbReference>
<dbReference type="SUPFAM" id="SSF63411">
    <property type="entry name" value="LuxS/MPP-like metallohydrolase"/>
    <property type="match status" value="1"/>
</dbReference>
<name>LUXS_ECO24</name>
<feature type="chain" id="PRO_1000057605" description="S-ribosylhomocysteine lyase">
    <location>
        <begin position="1"/>
        <end position="171"/>
    </location>
</feature>
<feature type="binding site" evidence="1">
    <location>
        <position position="54"/>
    </location>
    <ligand>
        <name>Fe cation</name>
        <dbReference type="ChEBI" id="CHEBI:24875"/>
    </ligand>
</feature>
<feature type="binding site" evidence="1">
    <location>
        <position position="58"/>
    </location>
    <ligand>
        <name>Fe cation</name>
        <dbReference type="ChEBI" id="CHEBI:24875"/>
    </ligand>
</feature>
<feature type="binding site" evidence="1">
    <location>
        <position position="128"/>
    </location>
    <ligand>
        <name>Fe cation</name>
        <dbReference type="ChEBI" id="CHEBI:24875"/>
    </ligand>
</feature>
<sequence length="171" mass="19416">MPLLDSFTVDHTRMEAPAVRVAKTMNTPHGDAITVFDLRFCVPNKEVMPERGIHTLEHLFAGFMRNHLNGNGVEIIDISPMGCRTGFYMSLIGTPDEQRVADAWKAAMEDVLKVQDQNQIPELNVYQCGTYQMHSLQEAQDIARSILERDVRINSNEELALPKEKLQELHI</sequence>
<protein>
    <recommendedName>
        <fullName evidence="1">S-ribosylhomocysteine lyase</fullName>
        <ecNumber evidence="1">4.4.1.21</ecNumber>
    </recommendedName>
    <alternativeName>
        <fullName evidence="1">AI-2 synthesis protein</fullName>
    </alternativeName>
    <alternativeName>
        <fullName evidence="1">Autoinducer-2 production protein LuxS</fullName>
    </alternativeName>
</protein>
<reference key="1">
    <citation type="journal article" date="2008" name="J. Bacteriol.">
        <title>The pangenome structure of Escherichia coli: comparative genomic analysis of E. coli commensal and pathogenic isolates.</title>
        <authorList>
            <person name="Rasko D.A."/>
            <person name="Rosovitz M.J."/>
            <person name="Myers G.S.A."/>
            <person name="Mongodin E.F."/>
            <person name="Fricke W.F."/>
            <person name="Gajer P."/>
            <person name="Crabtree J."/>
            <person name="Sebaihia M."/>
            <person name="Thomson N.R."/>
            <person name="Chaudhuri R."/>
            <person name="Henderson I.R."/>
            <person name="Sperandio V."/>
            <person name="Ravel J."/>
        </authorList>
    </citation>
    <scope>NUCLEOTIDE SEQUENCE [LARGE SCALE GENOMIC DNA]</scope>
    <source>
        <strain>E24377A / ETEC</strain>
    </source>
</reference>
<proteinExistence type="inferred from homology"/>
<keyword id="KW-0071">Autoinducer synthesis</keyword>
<keyword id="KW-0408">Iron</keyword>
<keyword id="KW-0456">Lyase</keyword>
<keyword id="KW-0479">Metal-binding</keyword>
<keyword id="KW-0673">Quorum sensing</keyword>
<keyword id="KW-1185">Reference proteome</keyword>
<organism>
    <name type="scientific">Escherichia coli O139:H28 (strain E24377A / ETEC)</name>
    <dbReference type="NCBI Taxonomy" id="331111"/>
    <lineage>
        <taxon>Bacteria</taxon>
        <taxon>Pseudomonadati</taxon>
        <taxon>Pseudomonadota</taxon>
        <taxon>Gammaproteobacteria</taxon>
        <taxon>Enterobacterales</taxon>
        <taxon>Enterobacteriaceae</taxon>
        <taxon>Escherichia</taxon>
    </lineage>
</organism>
<accession>A7ZQC0</accession>